<dbReference type="EMBL" id="CP001389">
    <property type="protein sequence ID" value="ACP25401.1"/>
    <property type="molecule type" value="Genomic_DNA"/>
</dbReference>
<dbReference type="RefSeq" id="WP_012708170.1">
    <property type="nucleotide sequence ID" value="NC_012587.1"/>
</dbReference>
<dbReference type="RefSeq" id="YP_002826154.1">
    <property type="nucleotide sequence ID" value="NC_012587.1"/>
</dbReference>
<dbReference type="SMR" id="C3MD82"/>
<dbReference type="STRING" id="394.NGR_c16360"/>
<dbReference type="KEGG" id="rhi:NGR_c16360"/>
<dbReference type="PATRIC" id="fig|394.7.peg.4452"/>
<dbReference type="eggNOG" id="COG0522">
    <property type="taxonomic scope" value="Bacteria"/>
</dbReference>
<dbReference type="HOGENOM" id="CLU_092403_0_0_5"/>
<dbReference type="OrthoDB" id="9803672at2"/>
<dbReference type="Proteomes" id="UP000001054">
    <property type="component" value="Chromosome"/>
</dbReference>
<dbReference type="GO" id="GO:0015935">
    <property type="term" value="C:small ribosomal subunit"/>
    <property type="evidence" value="ECO:0007669"/>
    <property type="project" value="InterPro"/>
</dbReference>
<dbReference type="GO" id="GO:0019843">
    <property type="term" value="F:rRNA binding"/>
    <property type="evidence" value="ECO:0007669"/>
    <property type="project" value="UniProtKB-UniRule"/>
</dbReference>
<dbReference type="GO" id="GO:0003735">
    <property type="term" value="F:structural constituent of ribosome"/>
    <property type="evidence" value="ECO:0007669"/>
    <property type="project" value="InterPro"/>
</dbReference>
<dbReference type="GO" id="GO:0042274">
    <property type="term" value="P:ribosomal small subunit biogenesis"/>
    <property type="evidence" value="ECO:0007669"/>
    <property type="project" value="TreeGrafter"/>
</dbReference>
<dbReference type="GO" id="GO:0006412">
    <property type="term" value="P:translation"/>
    <property type="evidence" value="ECO:0007669"/>
    <property type="project" value="UniProtKB-UniRule"/>
</dbReference>
<dbReference type="CDD" id="cd00165">
    <property type="entry name" value="S4"/>
    <property type="match status" value="1"/>
</dbReference>
<dbReference type="FunFam" id="3.10.290.10:FF:000001">
    <property type="entry name" value="30S ribosomal protein S4"/>
    <property type="match status" value="1"/>
</dbReference>
<dbReference type="Gene3D" id="1.10.1050.10">
    <property type="entry name" value="Ribosomal Protein S4 Delta 41, Chain A, domain 1"/>
    <property type="match status" value="1"/>
</dbReference>
<dbReference type="Gene3D" id="3.10.290.10">
    <property type="entry name" value="RNA-binding S4 domain"/>
    <property type="match status" value="1"/>
</dbReference>
<dbReference type="HAMAP" id="MF_01306_B">
    <property type="entry name" value="Ribosomal_uS4_B"/>
    <property type="match status" value="1"/>
</dbReference>
<dbReference type="InterPro" id="IPR022801">
    <property type="entry name" value="Ribosomal_uS4"/>
</dbReference>
<dbReference type="InterPro" id="IPR005709">
    <property type="entry name" value="Ribosomal_uS4_bac-type"/>
</dbReference>
<dbReference type="InterPro" id="IPR018079">
    <property type="entry name" value="Ribosomal_uS4_CS"/>
</dbReference>
<dbReference type="InterPro" id="IPR001912">
    <property type="entry name" value="Ribosomal_uS4_N"/>
</dbReference>
<dbReference type="InterPro" id="IPR002942">
    <property type="entry name" value="S4_RNA-bd"/>
</dbReference>
<dbReference type="InterPro" id="IPR036986">
    <property type="entry name" value="S4_RNA-bd_sf"/>
</dbReference>
<dbReference type="NCBIfam" id="NF003717">
    <property type="entry name" value="PRK05327.1"/>
    <property type="match status" value="1"/>
</dbReference>
<dbReference type="NCBIfam" id="TIGR01017">
    <property type="entry name" value="rpsD_bact"/>
    <property type="match status" value="1"/>
</dbReference>
<dbReference type="PANTHER" id="PTHR11831">
    <property type="entry name" value="30S 40S RIBOSOMAL PROTEIN"/>
    <property type="match status" value="1"/>
</dbReference>
<dbReference type="PANTHER" id="PTHR11831:SF4">
    <property type="entry name" value="SMALL RIBOSOMAL SUBUNIT PROTEIN US4M"/>
    <property type="match status" value="1"/>
</dbReference>
<dbReference type="Pfam" id="PF00163">
    <property type="entry name" value="Ribosomal_S4"/>
    <property type="match status" value="1"/>
</dbReference>
<dbReference type="Pfam" id="PF01479">
    <property type="entry name" value="S4"/>
    <property type="match status" value="1"/>
</dbReference>
<dbReference type="SMART" id="SM01390">
    <property type="entry name" value="Ribosomal_S4"/>
    <property type="match status" value="1"/>
</dbReference>
<dbReference type="SMART" id="SM00363">
    <property type="entry name" value="S4"/>
    <property type="match status" value="1"/>
</dbReference>
<dbReference type="SUPFAM" id="SSF55174">
    <property type="entry name" value="Alpha-L RNA-binding motif"/>
    <property type="match status" value="1"/>
</dbReference>
<dbReference type="PROSITE" id="PS00632">
    <property type="entry name" value="RIBOSOMAL_S4"/>
    <property type="match status" value="1"/>
</dbReference>
<dbReference type="PROSITE" id="PS50889">
    <property type="entry name" value="S4"/>
    <property type="match status" value="1"/>
</dbReference>
<feature type="chain" id="PRO_1000165420" description="Small ribosomal subunit protein uS4">
    <location>
        <begin position="1"/>
        <end position="205"/>
    </location>
</feature>
<feature type="domain" description="S4 RNA-binding" evidence="1">
    <location>
        <begin position="94"/>
        <end position="157"/>
    </location>
</feature>
<feature type="region of interest" description="Disordered" evidence="2">
    <location>
        <begin position="1"/>
        <end position="46"/>
    </location>
</feature>
<feature type="compositionally biased region" description="Basic and acidic residues" evidence="2">
    <location>
        <begin position="1"/>
        <end position="16"/>
    </location>
</feature>
<evidence type="ECO:0000255" key="1">
    <source>
        <dbReference type="HAMAP-Rule" id="MF_01306"/>
    </source>
</evidence>
<evidence type="ECO:0000256" key="2">
    <source>
        <dbReference type="SAM" id="MobiDB-lite"/>
    </source>
</evidence>
<evidence type="ECO:0000305" key="3"/>
<proteinExistence type="inferred from homology"/>
<accession>C3MD82</accession>
<gene>
    <name evidence="1" type="primary">rpsD</name>
    <name type="ordered locus">NGR_c16360</name>
</gene>
<keyword id="KW-1185">Reference proteome</keyword>
<keyword id="KW-0687">Ribonucleoprotein</keyword>
<keyword id="KW-0689">Ribosomal protein</keyword>
<keyword id="KW-0694">RNA-binding</keyword>
<keyword id="KW-0699">rRNA-binding</keyword>
<organism>
    <name type="scientific">Sinorhizobium fredii (strain NBRC 101917 / NGR234)</name>
    <dbReference type="NCBI Taxonomy" id="394"/>
    <lineage>
        <taxon>Bacteria</taxon>
        <taxon>Pseudomonadati</taxon>
        <taxon>Pseudomonadota</taxon>
        <taxon>Alphaproteobacteria</taxon>
        <taxon>Hyphomicrobiales</taxon>
        <taxon>Rhizobiaceae</taxon>
        <taxon>Sinorhizobium/Ensifer group</taxon>
        <taxon>Sinorhizobium</taxon>
    </lineage>
</organism>
<name>RS4_SINFN</name>
<protein>
    <recommendedName>
        <fullName evidence="1">Small ribosomal subunit protein uS4</fullName>
    </recommendedName>
    <alternativeName>
        <fullName evidence="3">30S ribosomal protein S4</fullName>
    </alternativeName>
</protein>
<reference key="1">
    <citation type="journal article" date="2009" name="Appl. Environ. Microbiol.">
        <title>Rhizobium sp. strain NGR234 possesses a remarkable number of secretion systems.</title>
        <authorList>
            <person name="Schmeisser C."/>
            <person name="Liesegang H."/>
            <person name="Krysciak D."/>
            <person name="Bakkou N."/>
            <person name="Le Quere A."/>
            <person name="Wollherr A."/>
            <person name="Heinemeyer I."/>
            <person name="Morgenstern B."/>
            <person name="Pommerening-Roeser A."/>
            <person name="Flores M."/>
            <person name="Palacios R."/>
            <person name="Brenner S."/>
            <person name="Gottschalk G."/>
            <person name="Schmitz R.A."/>
            <person name="Broughton W.J."/>
            <person name="Perret X."/>
            <person name="Strittmatter A.W."/>
            <person name="Streit W.R."/>
        </authorList>
    </citation>
    <scope>NUCLEOTIDE SEQUENCE [LARGE SCALE GENOMIC DNA]</scope>
    <source>
        <strain>NBRC 101917 / NGR234</strain>
    </source>
</reference>
<comment type="function">
    <text evidence="1">One of the primary rRNA binding proteins, it binds directly to 16S rRNA where it nucleates assembly of the body of the 30S subunit.</text>
</comment>
<comment type="function">
    <text evidence="1">With S5 and S12 plays an important role in translational accuracy.</text>
</comment>
<comment type="subunit">
    <text evidence="1">Part of the 30S ribosomal subunit. Contacts protein S5. The interaction surface between S4 and S5 is involved in control of translational fidelity.</text>
</comment>
<comment type="similarity">
    <text evidence="1">Belongs to the universal ribosomal protein uS4 family.</text>
</comment>
<sequence length="205" mass="23519">MSKRESSKYKIDRRMGENIWGRPKSPVNRREYGPGQHGQRRKSKLSDFGVQLRAKQKLKGYYGDIREKQFRAIFAEASRRKGDTPENLIGLLESRLDAIVYRAKFVPTVFAARQFVNHGHVKVNGVRVNIGSYRCKAGDVIEVKEKSKQLVSVLESVQLAERDVPDYIEADHNKMVATFVRVPALTDVPYPVVMEPHLVVEFYSR</sequence>